<name>SCED2_STAS1</name>
<evidence type="ECO:0000250" key="1"/>
<evidence type="ECO:0000255" key="2"/>
<evidence type="ECO:0000256" key="3">
    <source>
        <dbReference type="SAM" id="MobiDB-lite"/>
    </source>
</evidence>
<evidence type="ECO:0000305" key="4"/>
<organism>
    <name type="scientific">Staphylococcus saprophyticus subsp. saprophyticus (strain ATCC 15305 / DSM 20229 / NCIMB 8711 / NCTC 7292 / S-41)</name>
    <dbReference type="NCBI Taxonomy" id="342451"/>
    <lineage>
        <taxon>Bacteria</taxon>
        <taxon>Bacillati</taxon>
        <taxon>Bacillota</taxon>
        <taxon>Bacilli</taxon>
        <taxon>Bacillales</taxon>
        <taxon>Staphylococcaceae</taxon>
        <taxon>Staphylococcus</taxon>
    </lineage>
</organism>
<comment type="function">
    <text evidence="1">Is able to cleave peptidoglycan and affects clumping and separation of bacterial cells.</text>
</comment>
<comment type="subcellular location">
    <subcellularLocation>
        <location evidence="1">Secreted</location>
    </subcellularLocation>
</comment>
<comment type="similarity">
    <text evidence="4">Belongs to the transglycosylase family. SceD subfamily.</text>
</comment>
<dbReference type="EC" id="3.2.-.-"/>
<dbReference type="EMBL" id="AP008934">
    <property type="protein sequence ID" value="BAE17263.1"/>
    <property type="molecule type" value="Genomic_DNA"/>
</dbReference>
<dbReference type="RefSeq" id="WP_011302118.1">
    <property type="nucleotide sequence ID" value="NZ_MTGA01000037.1"/>
</dbReference>
<dbReference type="SMR" id="Q4A0X4"/>
<dbReference type="KEGG" id="ssp:SSP0118"/>
<dbReference type="PATRIC" id="fig|342451.11.peg.122"/>
<dbReference type="eggNOG" id="COG1388">
    <property type="taxonomic scope" value="Bacteria"/>
</dbReference>
<dbReference type="HOGENOM" id="CLU_099865_0_0_9"/>
<dbReference type="OrthoDB" id="2314263at2"/>
<dbReference type="Proteomes" id="UP000006371">
    <property type="component" value="Chromosome"/>
</dbReference>
<dbReference type="GO" id="GO:0005576">
    <property type="term" value="C:extracellular region"/>
    <property type="evidence" value="ECO:0007669"/>
    <property type="project" value="UniProtKB-SubCell"/>
</dbReference>
<dbReference type="GO" id="GO:0016798">
    <property type="term" value="F:hydrolase activity, acting on glycosyl bonds"/>
    <property type="evidence" value="ECO:0007669"/>
    <property type="project" value="UniProtKB-KW"/>
</dbReference>
<dbReference type="CDD" id="cd13925">
    <property type="entry name" value="RPF"/>
    <property type="match status" value="1"/>
</dbReference>
<dbReference type="Gene3D" id="1.10.530.10">
    <property type="match status" value="1"/>
</dbReference>
<dbReference type="InterPro" id="IPR023346">
    <property type="entry name" value="Lysozyme-like_dom_sf"/>
</dbReference>
<dbReference type="InterPro" id="IPR010618">
    <property type="entry name" value="RPF"/>
</dbReference>
<dbReference type="Pfam" id="PF06737">
    <property type="entry name" value="Transglycosylas"/>
    <property type="match status" value="1"/>
</dbReference>
<dbReference type="SUPFAM" id="SSF53955">
    <property type="entry name" value="Lysozyme-like"/>
    <property type="match status" value="1"/>
</dbReference>
<gene>
    <name type="primary">sceD2</name>
    <name type="ordered locus">SSP0118</name>
</gene>
<proteinExistence type="inferred from homology"/>
<keyword id="KW-0326">Glycosidase</keyword>
<keyword id="KW-0378">Hydrolase</keyword>
<keyword id="KW-1185">Reference proteome</keyword>
<keyword id="KW-0964">Secreted</keyword>
<keyword id="KW-0732">Signal</keyword>
<sequence>MKKTVIASTLAVGLGVTGIAAGNSADASEQGVDKAQLAQQAQSNPESLNAAPIQDGAYNINFNYNNTDYSFQSDGENFSWSYGEGSGEGSNASSEQATDNSSQQTAEQPQQVEQPQQTEQASTEQPAQEAAPQTEATQQPQQEATTQSASSSNESSSNESSSSEASESSSSGVNAHLQQIAQRESGGDIHATNPSSGASGKFQFLQSTWDSVAPAEYQGQPAASAPESVQDAAAQKLYDTEGASQWVTA</sequence>
<protein>
    <recommendedName>
        <fullName>Probable transglycosylase SceD 2</fullName>
        <ecNumber>3.2.-.-</ecNumber>
    </recommendedName>
</protein>
<feature type="signal peptide" evidence="2">
    <location>
        <begin position="1"/>
        <end position="27"/>
    </location>
</feature>
<feature type="chain" id="PRO_0000320322" description="Probable transglycosylase SceD 2">
    <location>
        <begin position="28"/>
        <end position="249"/>
    </location>
</feature>
<feature type="region of interest" description="Disordered" evidence="3">
    <location>
        <begin position="80"/>
        <end position="203"/>
    </location>
</feature>
<feature type="compositionally biased region" description="Low complexity" evidence="3">
    <location>
        <begin position="80"/>
        <end position="95"/>
    </location>
</feature>
<feature type="compositionally biased region" description="Low complexity" evidence="3">
    <location>
        <begin position="103"/>
        <end position="171"/>
    </location>
</feature>
<feature type="compositionally biased region" description="Polar residues" evidence="3">
    <location>
        <begin position="172"/>
        <end position="182"/>
    </location>
</feature>
<feature type="compositionally biased region" description="Polar residues" evidence="3">
    <location>
        <begin position="192"/>
        <end position="203"/>
    </location>
</feature>
<reference key="1">
    <citation type="journal article" date="2005" name="Proc. Natl. Acad. Sci. U.S.A.">
        <title>Whole genome sequence of Staphylococcus saprophyticus reveals the pathogenesis of uncomplicated urinary tract infection.</title>
        <authorList>
            <person name="Kuroda M."/>
            <person name="Yamashita A."/>
            <person name="Hirakawa H."/>
            <person name="Kumano M."/>
            <person name="Morikawa K."/>
            <person name="Higashide M."/>
            <person name="Maruyama A."/>
            <person name="Inose Y."/>
            <person name="Matoba K."/>
            <person name="Toh H."/>
            <person name="Kuhara S."/>
            <person name="Hattori M."/>
            <person name="Ohta T."/>
        </authorList>
    </citation>
    <scope>NUCLEOTIDE SEQUENCE [LARGE SCALE GENOMIC DNA]</scope>
    <source>
        <strain>ATCC 15305 / DSM 20229 / NCIMB 8711 / NCTC 7292 / S-41</strain>
    </source>
</reference>
<accession>Q4A0X4</accession>